<dbReference type="EMBL" id="BA000019">
    <property type="protein sequence ID" value="BAB74511.1"/>
    <property type="molecule type" value="Genomic_DNA"/>
</dbReference>
<dbReference type="PIR" id="AE2157">
    <property type="entry name" value="AE2157"/>
</dbReference>
<dbReference type="RefSeq" id="WP_010996963.1">
    <property type="nucleotide sequence ID" value="NZ_RSCN01000003.1"/>
</dbReference>
<dbReference type="SMR" id="Q8YTB1"/>
<dbReference type="STRING" id="103690.gene:10494846"/>
<dbReference type="KEGG" id="ana:alr2812"/>
<dbReference type="eggNOG" id="COG0806">
    <property type="taxonomic scope" value="Bacteria"/>
</dbReference>
<dbReference type="OrthoDB" id="9810331at2"/>
<dbReference type="Proteomes" id="UP000002483">
    <property type="component" value="Chromosome"/>
</dbReference>
<dbReference type="GO" id="GO:0005737">
    <property type="term" value="C:cytoplasm"/>
    <property type="evidence" value="ECO:0007669"/>
    <property type="project" value="UniProtKB-SubCell"/>
</dbReference>
<dbReference type="GO" id="GO:0005840">
    <property type="term" value="C:ribosome"/>
    <property type="evidence" value="ECO:0007669"/>
    <property type="project" value="InterPro"/>
</dbReference>
<dbReference type="GO" id="GO:0043022">
    <property type="term" value="F:ribosome binding"/>
    <property type="evidence" value="ECO:0007669"/>
    <property type="project" value="InterPro"/>
</dbReference>
<dbReference type="GO" id="GO:0042274">
    <property type="term" value="P:ribosomal small subunit biogenesis"/>
    <property type="evidence" value="ECO:0007669"/>
    <property type="project" value="UniProtKB-UniRule"/>
</dbReference>
<dbReference type="GO" id="GO:0006364">
    <property type="term" value="P:rRNA processing"/>
    <property type="evidence" value="ECO:0007669"/>
    <property type="project" value="UniProtKB-UniRule"/>
</dbReference>
<dbReference type="Gene3D" id="2.30.30.240">
    <property type="entry name" value="PRC-barrel domain"/>
    <property type="match status" value="1"/>
</dbReference>
<dbReference type="Gene3D" id="2.40.30.60">
    <property type="entry name" value="RimM"/>
    <property type="match status" value="1"/>
</dbReference>
<dbReference type="HAMAP" id="MF_00014">
    <property type="entry name" value="Ribosome_mat_RimM"/>
    <property type="match status" value="1"/>
</dbReference>
<dbReference type="InterPro" id="IPR011033">
    <property type="entry name" value="PRC_barrel-like_sf"/>
</dbReference>
<dbReference type="InterPro" id="IPR056792">
    <property type="entry name" value="PRC_RimM"/>
</dbReference>
<dbReference type="InterPro" id="IPR011961">
    <property type="entry name" value="RimM"/>
</dbReference>
<dbReference type="InterPro" id="IPR002676">
    <property type="entry name" value="RimM_N"/>
</dbReference>
<dbReference type="InterPro" id="IPR036976">
    <property type="entry name" value="RimM_N_sf"/>
</dbReference>
<dbReference type="InterPro" id="IPR009000">
    <property type="entry name" value="Transl_B-barrel_sf"/>
</dbReference>
<dbReference type="NCBIfam" id="TIGR02273">
    <property type="entry name" value="16S_RimM"/>
    <property type="match status" value="1"/>
</dbReference>
<dbReference type="PANTHER" id="PTHR33692">
    <property type="entry name" value="RIBOSOME MATURATION FACTOR RIMM"/>
    <property type="match status" value="1"/>
</dbReference>
<dbReference type="PANTHER" id="PTHR33692:SF1">
    <property type="entry name" value="RIBOSOME MATURATION FACTOR RIMM"/>
    <property type="match status" value="1"/>
</dbReference>
<dbReference type="Pfam" id="PF24986">
    <property type="entry name" value="PRC_RimM"/>
    <property type="match status" value="1"/>
</dbReference>
<dbReference type="Pfam" id="PF01782">
    <property type="entry name" value="RimM"/>
    <property type="match status" value="1"/>
</dbReference>
<dbReference type="SUPFAM" id="SSF50346">
    <property type="entry name" value="PRC-barrel domain"/>
    <property type="match status" value="1"/>
</dbReference>
<dbReference type="SUPFAM" id="SSF50447">
    <property type="entry name" value="Translation proteins"/>
    <property type="match status" value="1"/>
</dbReference>
<proteinExistence type="inferred from homology"/>
<name>RIMM_NOSS1</name>
<comment type="function">
    <text evidence="1">An accessory protein needed during the final step in the assembly of 30S ribosomal subunit, possibly for assembly of the head region. Essential for efficient processing of 16S rRNA. May be needed both before and after RbfA during the maturation of 16S rRNA. It has affinity for free ribosomal 30S subunits but not for 70S ribosomes.</text>
</comment>
<comment type="subunit">
    <text evidence="1">Binds ribosomal protein uS19.</text>
</comment>
<comment type="subcellular location">
    <subcellularLocation>
        <location evidence="1">Cytoplasm</location>
    </subcellularLocation>
</comment>
<comment type="domain">
    <text evidence="1">The PRC barrel domain binds ribosomal protein uS19.</text>
</comment>
<comment type="similarity">
    <text evidence="1">Belongs to the RimM family.</text>
</comment>
<keyword id="KW-0143">Chaperone</keyword>
<keyword id="KW-0963">Cytoplasm</keyword>
<keyword id="KW-1185">Reference proteome</keyword>
<keyword id="KW-0690">Ribosome biogenesis</keyword>
<keyword id="KW-0698">rRNA processing</keyword>
<accession>Q8YTB1</accession>
<protein>
    <recommendedName>
        <fullName evidence="1">Ribosome maturation factor RimM</fullName>
    </recommendedName>
</protein>
<gene>
    <name evidence="1" type="primary">rimM</name>
    <name type="ordered locus">alr2812</name>
</gene>
<sequence length="246" mass="26921">MKRKQESKGAGEKRQGAGGRGQGEKKQGKQGRQGRQGRQGEKSPVPSPQSPIPNPQFTTPNPDEWLQIGKIVSAQGLSGEVRVYPDSDFPERFEVPGTRWLLRPGQTEPQPIELLHGRYLENKNLYVLQLAGVENRSQSEELRGCMLFVPASDRPELGEDEYHVVDLIGMEVFLQASGDLVGAVVDVIPAGNDLLEVSLHEPVTSDKKPKTVLIPFVKAIAPVVDLQTRRIEITPPPGLLELGSGV</sequence>
<organism>
    <name type="scientific">Nostoc sp. (strain PCC 7120 / SAG 25.82 / UTEX 2576)</name>
    <dbReference type="NCBI Taxonomy" id="103690"/>
    <lineage>
        <taxon>Bacteria</taxon>
        <taxon>Bacillati</taxon>
        <taxon>Cyanobacteriota</taxon>
        <taxon>Cyanophyceae</taxon>
        <taxon>Nostocales</taxon>
        <taxon>Nostocaceae</taxon>
        <taxon>Nostoc</taxon>
    </lineage>
</organism>
<reference key="1">
    <citation type="journal article" date="2001" name="DNA Res.">
        <title>Complete genomic sequence of the filamentous nitrogen-fixing cyanobacterium Anabaena sp. strain PCC 7120.</title>
        <authorList>
            <person name="Kaneko T."/>
            <person name="Nakamura Y."/>
            <person name="Wolk C.P."/>
            <person name="Kuritz T."/>
            <person name="Sasamoto S."/>
            <person name="Watanabe A."/>
            <person name="Iriguchi M."/>
            <person name="Ishikawa A."/>
            <person name="Kawashima K."/>
            <person name="Kimura T."/>
            <person name="Kishida Y."/>
            <person name="Kohara M."/>
            <person name="Matsumoto M."/>
            <person name="Matsuno A."/>
            <person name="Muraki A."/>
            <person name="Nakazaki N."/>
            <person name="Shimpo S."/>
            <person name="Sugimoto M."/>
            <person name="Takazawa M."/>
            <person name="Yamada M."/>
            <person name="Yasuda M."/>
            <person name="Tabata S."/>
        </authorList>
    </citation>
    <scope>NUCLEOTIDE SEQUENCE [LARGE SCALE GENOMIC DNA]</scope>
    <source>
        <strain>PCC 7120 / SAG 25.82 / UTEX 2576</strain>
    </source>
</reference>
<feature type="chain" id="PRO_0000163242" description="Ribosome maturation factor RimM">
    <location>
        <begin position="1"/>
        <end position="246"/>
    </location>
</feature>
<feature type="domain" description="PRC barrel" evidence="1">
    <location>
        <begin position="158"/>
        <end position="239"/>
    </location>
</feature>
<feature type="region of interest" description="Disordered" evidence="2">
    <location>
        <begin position="1"/>
        <end position="63"/>
    </location>
</feature>
<feature type="compositionally biased region" description="Basic and acidic residues" evidence="2">
    <location>
        <begin position="1"/>
        <end position="15"/>
    </location>
</feature>
<feature type="compositionally biased region" description="Pro residues" evidence="2">
    <location>
        <begin position="45"/>
        <end position="54"/>
    </location>
</feature>
<evidence type="ECO:0000255" key="1">
    <source>
        <dbReference type="HAMAP-Rule" id="MF_00014"/>
    </source>
</evidence>
<evidence type="ECO:0000256" key="2">
    <source>
        <dbReference type="SAM" id="MobiDB-lite"/>
    </source>
</evidence>